<proteinExistence type="inferred from homology"/>
<reference key="1">
    <citation type="submission" date="2006-02" db="EMBL/GenBank/DDBJ databases">
        <title>Complete sequence of chromosome of Jannaschia sp. CCS1.</title>
        <authorList>
            <consortium name="US DOE Joint Genome Institute"/>
            <person name="Copeland A."/>
            <person name="Lucas S."/>
            <person name="Lapidus A."/>
            <person name="Barry K."/>
            <person name="Detter J.C."/>
            <person name="Glavina del Rio T."/>
            <person name="Hammon N."/>
            <person name="Israni S."/>
            <person name="Pitluck S."/>
            <person name="Brettin T."/>
            <person name="Bruce D."/>
            <person name="Han C."/>
            <person name="Tapia R."/>
            <person name="Gilna P."/>
            <person name="Chertkov O."/>
            <person name="Saunders E."/>
            <person name="Schmutz J."/>
            <person name="Larimer F."/>
            <person name="Land M."/>
            <person name="Kyrpides N."/>
            <person name="Lykidis A."/>
            <person name="Moran M.A."/>
            <person name="Belas R."/>
            <person name="Ye W."/>
            <person name="Buchan A."/>
            <person name="Gonzalez J.M."/>
            <person name="Schell M.A."/>
            <person name="Richardson P."/>
        </authorList>
    </citation>
    <scope>NUCLEOTIDE SEQUENCE [LARGE SCALE GENOMIC DNA]</scope>
    <source>
        <strain>CCS1</strain>
    </source>
</reference>
<sequence length="152" mass="16306">MRGLKKQRRIQILIVAAVALTLSSVLIGYALRDGINFFRPPAEVAENPPPPSEVFRIGGMVEEGTLVRGQGETITFNVTDFAASIPVSYTGVLPDLFGEGEGMVGTGRLVNGTFEATEILARHDETYMPAEVTEALEAQGYSPDGYARDGDS</sequence>
<comment type="function">
    <text evidence="1">Heme chaperone required for the biogenesis of c-type cytochromes. Transiently binds heme delivered by CcmC and transfers the heme to apo-cytochromes in a process facilitated by CcmF and CcmH.</text>
</comment>
<comment type="subcellular location">
    <subcellularLocation>
        <location evidence="1">Cell inner membrane</location>
        <topology evidence="1">Single-pass type II membrane protein</topology>
        <orientation evidence="1">Periplasmic side</orientation>
    </subcellularLocation>
</comment>
<comment type="similarity">
    <text evidence="1">Belongs to the CcmE/CycJ family.</text>
</comment>
<evidence type="ECO:0000255" key="1">
    <source>
        <dbReference type="HAMAP-Rule" id="MF_01959"/>
    </source>
</evidence>
<name>CCME_JANSC</name>
<protein>
    <recommendedName>
        <fullName evidence="1">Cytochrome c-type biogenesis protein CcmE</fullName>
    </recommendedName>
    <alternativeName>
        <fullName evidence="1">Cytochrome c maturation protein E</fullName>
    </alternativeName>
    <alternativeName>
        <fullName evidence="1">Heme chaperone CcmE</fullName>
    </alternativeName>
</protein>
<gene>
    <name evidence="1" type="primary">ccmE</name>
    <name evidence="1" type="synonym">cycJ</name>
    <name type="ordered locus">Jann_2335</name>
</gene>
<keyword id="KW-0997">Cell inner membrane</keyword>
<keyword id="KW-1003">Cell membrane</keyword>
<keyword id="KW-0201">Cytochrome c-type biogenesis</keyword>
<keyword id="KW-0349">Heme</keyword>
<keyword id="KW-0408">Iron</keyword>
<keyword id="KW-0472">Membrane</keyword>
<keyword id="KW-0479">Metal-binding</keyword>
<keyword id="KW-1185">Reference proteome</keyword>
<keyword id="KW-0735">Signal-anchor</keyword>
<keyword id="KW-0812">Transmembrane</keyword>
<keyword id="KW-1133">Transmembrane helix</keyword>
<accession>Q28PW0</accession>
<organism>
    <name type="scientific">Jannaschia sp. (strain CCS1)</name>
    <dbReference type="NCBI Taxonomy" id="290400"/>
    <lineage>
        <taxon>Bacteria</taxon>
        <taxon>Pseudomonadati</taxon>
        <taxon>Pseudomonadota</taxon>
        <taxon>Alphaproteobacteria</taxon>
        <taxon>Rhodobacterales</taxon>
        <taxon>Roseobacteraceae</taxon>
        <taxon>Jannaschia</taxon>
    </lineage>
</organism>
<feature type="chain" id="PRO_1000070819" description="Cytochrome c-type biogenesis protein CcmE">
    <location>
        <begin position="1"/>
        <end position="152"/>
    </location>
</feature>
<feature type="topological domain" description="Cytoplasmic" evidence="1">
    <location>
        <begin position="1"/>
        <end position="9"/>
    </location>
</feature>
<feature type="transmembrane region" description="Helical; Signal-anchor for type II membrane protein" evidence="1">
    <location>
        <begin position="10"/>
        <end position="30"/>
    </location>
</feature>
<feature type="topological domain" description="Periplasmic" evidence="1">
    <location>
        <begin position="31"/>
        <end position="152"/>
    </location>
</feature>
<feature type="binding site" description="covalent" evidence="1">
    <location>
        <position position="123"/>
    </location>
    <ligand>
        <name>heme</name>
        <dbReference type="ChEBI" id="CHEBI:30413"/>
    </ligand>
</feature>
<feature type="binding site" description="axial binding residue" evidence="1">
    <location>
        <position position="127"/>
    </location>
    <ligand>
        <name>heme</name>
        <dbReference type="ChEBI" id="CHEBI:30413"/>
    </ligand>
    <ligandPart>
        <name>Fe</name>
        <dbReference type="ChEBI" id="CHEBI:18248"/>
    </ligandPart>
</feature>
<dbReference type="EMBL" id="CP000264">
    <property type="protein sequence ID" value="ABD55252.1"/>
    <property type="molecule type" value="Genomic_DNA"/>
</dbReference>
<dbReference type="RefSeq" id="WP_011455456.1">
    <property type="nucleotide sequence ID" value="NC_007802.1"/>
</dbReference>
<dbReference type="SMR" id="Q28PW0"/>
<dbReference type="STRING" id="290400.Jann_2335"/>
<dbReference type="KEGG" id="jan:Jann_2335"/>
<dbReference type="eggNOG" id="COG2332">
    <property type="taxonomic scope" value="Bacteria"/>
</dbReference>
<dbReference type="HOGENOM" id="CLU_079503_1_1_5"/>
<dbReference type="OrthoDB" id="9793584at2"/>
<dbReference type="Proteomes" id="UP000008326">
    <property type="component" value="Chromosome"/>
</dbReference>
<dbReference type="GO" id="GO:0005886">
    <property type="term" value="C:plasma membrane"/>
    <property type="evidence" value="ECO:0007669"/>
    <property type="project" value="UniProtKB-SubCell"/>
</dbReference>
<dbReference type="GO" id="GO:0020037">
    <property type="term" value="F:heme binding"/>
    <property type="evidence" value="ECO:0007669"/>
    <property type="project" value="InterPro"/>
</dbReference>
<dbReference type="GO" id="GO:0046872">
    <property type="term" value="F:metal ion binding"/>
    <property type="evidence" value="ECO:0007669"/>
    <property type="project" value="UniProtKB-KW"/>
</dbReference>
<dbReference type="GO" id="GO:0017004">
    <property type="term" value="P:cytochrome complex assembly"/>
    <property type="evidence" value="ECO:0007669"/>
    <property type="project" value="UniProtKB-KW"/>
</dbReference>
<dbReference type="Gene3D" id="2.40.50.140">
    <property type="entry name" value="Nucleic acid-binding proteins"/>
    <property type="match status" value="1"/>
</dbReference>
<dbReference type="HAMAP" id="MF_01959">
    <property type="entry name" value="CcmE"/>
    <property type="match status" value="1"/>
</dbReference>
<dbReference type="InterPro" id="IPR004329">
    <property type="entry name" value="CcmE"/>
</dbReference>
<dbReference type="InterPro" id="IPR036127">
    <property type="entry name" value="CcmE-like_sf"/>
</dbReference>
<dbReference type="InterPro" id="IPR012340">
    <property type="entry name" value="NA-bd_OB-fold"/>
</dbReference>
<dbReference type="NCBIfam" id="NF009727">
    <property type="entry name" value="PRK13254.1-1"/>
    <property type="match status" value="1"/>
</dbReference>
<dbReference type="NCBIfam" id="NF009731">
    <property type="entry name" value="PRK13254.1-5"/>
    <property type="match status" value="1"/>
</dbReference>
<dbReference type="PANTHER" id="PTHR34128">
    <property type="entry name" value="CYTOCHROME C-TYPE BIOGENESIS PROTEIN CCME HOMOLOG, MITOCHONDRIAL"/>
    <property type="match status" value="1"/>
</dbReference>
<dbReference type="PANTHER" id="PTHR34128:SF2">
    <property type="entry name" value="CYTOCHROME C-TYPE BIOGENESIS PROTEIN CCME HOMOLOG, MITOCHONDRIAL"/>
    <property type="match status" value="1"/>
</dbReference>
<dbReference type="Pfam" id="PF03100">
    <property type="entry name" value="CcmE"/>
    <property type="match status" value="1"/>
</dbReference>
<dbReference type="SUPFAM" id="SSF82093">
    <property type="entry name" value="Heme chaperone CcmE"/>
    <property type="match status" value="1"/>
</dbReference>